<name>PNP_CUPMC</name>
<organism>
    <name type="scientific">Cupriavidus metallidurans (strain ATCC 43123 / DSM 2839 / NBRC 102507 / CH34)</name>
    <name type="common">Ralstonia metallidurans</name>
    <dbReference type="NCBI Taxonomy" id="266264"/>
    <lineage>
        <taxon>Bacteria</taxon>
        <taxon>Pseudomonadati</taxon>
        <taxon>Pseudomonadota</taxon>
        <taxon>Betaproteobacteria</taxon>
        <taxon>Burkholderiales</taxon>
        <taxon>Burkholderiaceae</taxon>
        <taxon>Cupriavidus</taxon>
    </lineage>
</organism>
<proteinExistence type="inferred from homology"/>
<feature type="chain" id="PRO_0000329796" description="Polyribonucleotide nucleotidyltransferase">
    <location>
        <begin position="1"/>
        <end position="725"/>
    </location>
</feature>
<feature type="domain" description="KH" evidence="1">
    <location>
        <begin position="555"/>
        <end position="614"/>
    </location>
</feature>
<feature type="domain" description="S1 motif" evidence="1">
    <location>
        <begin position="624"/>
        <end position="692"/>
    </location>
</feature>
<feature type="region of interest" description="Disordered" evidence="2">
    <location>
        <begin position="702"/>
        <end position="725"/>
    </location>
</feature>
<feature type="compositionally biased region" description="Low complexity" evidence="2">
    <location>
        <begin position="706"/>
        <end position="725"/>
    </location>
</feature>
<feature type="binding site" evidence="1">
    <location>
        <position position="488"/>
    </location>
    <ligand>
        <name>Mg(2+)</name>
        <dbReference type="ChEBI" id="CHEBI:18420"/>
    </ligand>
</feature>
<feature type="binding site" evidence="1">
    <location>
        <position position="494"/>
    </location>
    <ligand>
        <name>Mg(2+)</name>
        <dbReference type="ChEBI" id="CHEBI:18420"/>
    </ligand>
</feature>
<gene>
    <name evidence="1" type="primary">pnp</name>
    <name type="ordered locus">Rmet_0923</name>
</gene>
<evidence type="ECO:0000255" key="1">
    <source>
        <dbReference type="HAMAP-Rule" id="MF_01595"/>
    </source>
</evidence>
<evidence type="ECO:0000256" key="2">
    <source>
        <dbReference type="SAM" id="MobiDB-lite"/>
    </source>
</evidence>
<keyword id="KW-0963">Cytoplasm</keyword>
<keyword id="KW-0460">Magnesium</keyword>
<keyword id="KW-0479">Metal-binding</keyword>
<keyword id="KW-0548">Nucleotidyltransferase</keyword>
<keyword id="KW-1185">Reference proteome</keyword>
<keyword id="KW-0694">RNA-binding</keyword>
<keyword id="KW-0808">Transferase</keyword>
<comment type="function">
    <text evidence="1">Involved in mRNA degradation. Catalyzes the phosphorolysis of single-stranded polyribonucleotides processively in the 3'- to 5'-direction.</text>
</comment>
<comment type="catalytic activity">
    <reaction evidence="1">
        <text>RNA(n+1) + phosphate = RNA(n) + a ribonucleoside 5'-diphosphate</text>
        <dbReference type="Rhea" id="RHEA:22096"/>
        <dbReference type="Rhea" id="RHEA-COMP:14527"/>
        <dbReference type="Rhea" id="RHEA-COMP:17342"/>
        <dbReference type="ChEBI" id="CHEBI:43474"/>
        <dbReference type="ChEBI" id="CHEBI:57930"/>
        <dbReference type="ChEBI" id="CHEBI:140395"/>
        <dbReference type="EC" id="2.7.7.8"/>
    </reaction>
</comment>
<comment type="cofactor">
    <cofactor evidence="1">
        <name>Mg(2+)</name>
        <dbReference type="ChEBI" id="CHEBI:18420"/>
    </cofactor>
</comment>
<comment type="subcellular location">
    <subcellularLocation>
        <location evidence="1">Cytoplasm</location>
    </subcellularLocation>
</comment>
<comment type="similarity">
    <text evidence="1">Belongs to the polyribonucleotide nucleotidyltransferase family.</text>
</comment>
<sequence>MTMFNKIVKEFQWGQHTVRMETGEIARQASGAVIVDVEDTVVLATVVAAKSPKAGQDFFPLTVDYIEKTYAAGKIPGGFFKREGRPSENETLTSRLIDRPLRPLFPEGFYNDVQVVIHVLSINPEIPADIPALIASSAALAVSGIPFNGPVGAARVGYKDGQYLLNPTRAQIAASDLDLVVAGTERAVLMVESEAHQLSEDVMLGAVVYGHEQMQIAINAIHDLVREGGKPEWDWAPAPKNEALIAKVSEIGLPLLQQAYQLRQKSARSTKLKEIYATVQAQLAEAGVEADKVEVGNVLFDLEAKIVRGQILAGEPRIDGRDTRTVRPIEIRSSVLPRAHGSALFTRGETQALVVATLGTKSDEQIIDALAGEYRDRFMLHYNMPPFATGETGRVGSPKRREIGHGRLAKRALIPVLPKDDEFAYTIRLVSEITESNGSSSMASVCGGCLALMDAGVPVKAHVAGVAMGLILEGNKFAVLTDILGDEDHLGDMDFKVAGTDAGITALQMDIKVQGITKEIMQVALAQAREGRMHILGAMQGAMGHARTELSAHAPRMITMKIHPDKIREVIGKGGSTIQALTKETGTTIDIQEDGTITIASTSTDGMAEAKRRIEGITAEAEVGKIYAGTVLKLLDFGAIVNILPGKDGLLHISEIVNERVKDIKDWLKEGQQVRVKLIQADEKGRLRLSLKAALAEEGGSISPIAQGDAPAAAPAAPASPDQQQ</sequence>
<accession>Q1LPW7</accession>
<reference key="1">
    <citation type="journal article" date="2010" name="PLoS ONE">
        <title>The complete genome sequence of Cupriavidus metallidurans strain CH34, a master survivalist in harsh and anthropogenic environments.</title>
        <authorList>
            <person name="Janssen P.J."/>
            <person name="Van Houdt R."/>
            <person name="Moors H."/>
            <person name="Monsieurs P."/>
            <person name="Morin N."/>
            <person name="Michaux A."/>
            <person name="Benotmane M.A."/>
            <person name="Leys N."/>
            <person name="Vallaeys T."/>
            <person name="Lapidus A."/>
            <person name="Monchy S."/>
            <person name="Medigue C."/>
            <person name="Taghavi S."/>
            <person name="McCorkle S."/>
            <person name="Dunn J."/>
            <person name="van der Lelie D."/>
            <person name="Mergeay M."/>
        </authorList>
    </citation>
    <scope>NUCLEOTIDE SEQUENCE [LARGE SCALE GENOMIC DNA]</scope>
    <source>
        <strain>ATCC 43123 / DSM 2839 / NBRC 102507 / CH34</strain>
    </source>
</reference>
<protein>
    <recommendedName>
        <fullName evidence="1">Polyribonucleotide nucleotidyltransferase</fullName>
        <ecNumber evidence="1">2.7.7.8</ecNumber>
    </recommendedName>
    <alternativeName>
        <fullName evidence="1">Polynucleotide phosphorylase</fullName>
        <shortName evidence="1">PNPase</shortName>
    </alternativeName>
</protein>
<dbReference type="EC" id="2.7.7.8" evidence="1"/>
<dbReference type="EMBL" id="CP000352">
    <property type="protein sequence ID" value="ABF07809.1"/>
    <property type="molecule type" value="Genomic_DNA"/>
</dbReference>
<dbReference type="RefSeq" id="WP_011515744.1">
    <property type="nucleotide sequence ID" value="NC_007973.1"/>
</dbReference>
<dbReference type="SMR" id="Q1LPW7"/>
<dbReference type="STRING" id="266264.Rmet_0923"/>
<dbReference type="GeneID" id="60825409"/>
<dbReference type="KEGG" id="rme:Rmet_0923"/>
<dbReference type="eggNOG" id="COG1185">
    <property type="taxonomic scope" value="Bacteria"/>
</dbReference>
<dbReference type="HOGENOM" id="CLU_004217_2_2_4"/>
<dbReference type="Proteomes" id="UP000002429">
    <property type="component" value="Chromosome"/>
</dbReference>
<dbReference type="GO" id="GO:0005829">
    <property type="term" value="C:cytosol"/>
    <property type="evidence" value="ECO:0007669"/>
    <property type="project" value="TreeGrafter"/>
</dbReference>
<dbReference type="GO" id="GO:0000175">
    <property type="term" value="F:3'-5'-RNA exonuclease activity"/>
    <property type="evidence" value="ECO:0007669"/>
    <property type="project" value="TreeGrafter"/>
</dbReference>
<dbReference type="GO" id="GO:0000287">
    <property type="term" value="F:magnesium ion binding"/>
    <property type="evidence" value="ECO:0007669"/>
    <property type="project" value="UniProtKB-UniRule"/>
</dbReference>
<dbReference type="GO" id="GO:0004654">
    <property type="term" value="F:polyribonucleotide nucleotidyltransferase activity"/>
    <property type="evidence" value="ECO:0007669"/>
    <property type="project" value="UniProtKB-UniRule"/>
</dbReference>
<dbReference type="GO" id="GO:0003723">
    <property type="term" value="F:RNA binding"/>
    <property type="evidence" value="ECO:0007669"/>
    <property type="project" value="UniProtKB-UniRule"/>
</dbReference>
<dbReference type="GO" id="GO:0006402">
    <property type="term" value="P:mRNA catabolic process"/>
    <property type="evidence" value="ECO:0007669"/>
    <property type="project" value="UniProtKB-UniRule"/>
</dbReference>
<dbReference type="GO" id="GO:0006396">
    <property type="term" value="P:RNA processing"/>
    <property type="evidence" value="ECO:0007669"/>
    <property type="project" value="InterPro"/>
</dbReference>
<dbReference type="CDD" id="cd02393">
    <property type="entry name" value="KH-I_PNPase"/>
    <property type="match status" value="1"/>
</dbReference>
<dbReference type="CDD" id="cd11363">
    <property type="entry name" value="RNase_PH_PNPase_1"/>
    <property type="match status" value="1"/>
</dbReference>
<dbReference type="CDD" id="cd11364">
    <property type="entry name" value="RNase_PH_PNPase_2"/>
    <property type="match status" value="1"/>
</dbReference>
<dbReference type="CDD" id="cd04472">
    <property type="entry name" value="S1_PNPase"/>
    <property type="match status" value="1"/>
</dbReference>
<dbReference type="FunFam" id="3.30.1370.10:FF:000001">
    <property type="entry name" value="Polyribonucleotide nucleotidyltransferase"/>
    <property type="match status" value="1"/>
</dbReference>
<dbReference type="FunFam" id="3.30.230.70:FF:000001">
    <property type="entry name" value="Polyribonucleotide nucleotidyltransferase"/>
    <property type="match status" value="1"/>
</dbReference>
<dbReference type="FunFam" id="3.30.230.70:FF:000002">
    <property type="entry name" value="Polyribonucleotide nucleotidyltransferase"/>
    <property type="match status" value="1"/>
</dbReference>
<dbReference type="FunFam" id="2.40.50.140:FF:000189">
    <property type="entry name" value="Polyribonucleotide nucleotidyltransferase, putative"/>
    <property type="match status" value="1"/>
</dbReference>
<dbReference type="Gene3D" id="3.30.230.70">
    <property type="entry name" value="GHMP Kinase, N-terminal domain"/>
    <property type="match status" value="2"/>
</dbReference>
<dbReference type="Gene3D" id="3.30.1370.10">
    <property type="entry name" value="K Homology domain, type 1"/>
    <property type="match status" value="1"/>
</dbReference>
<dbReference type="Gene3D" id="2.40.50.140">
    <property type="entry name" value="Nucleic acid-binding proteins"/>
    <property type="match status" value="1"/>
</dbReference>
<dbReference type="HAMAP" id="MF_01595">
    <property type="entry name" value="PNPase"/>
    <property type="match status" value="1"/>
</dbReference>
<dbReference type="InterPro" id="IPR001247">
    <property type="entry name" value="ExoRNase_PH_dom1"/>
</dbReference>
<dbReference type="InterPro" id="IPR015847">
    <property type="entry name" value="ExoRNase_PH_dom2"/>
</dbReference>
<dbReference type="InterPro" id="IPR036345">
    <property type="entry name" value="ExoRNase_PH_dom2_sf"/>
</dbReference>
<dbReference type="InterPro" id="IPR004087">
    <property type="entry name" value="KH_dom"/>
</dbReference>
<dbReference type="InterPro" id="IPR004088">
    <property type="entry name" value="KH_dom_type_1"/>
</dbReference>
<dbReference type="InterPro" id="IPR036612">
    <property type="entry name" value="KH_dom_type_1_sf"/>
</dbReference>
<dbReference type="InterPro" id="IPR012340">
    <property type="entry name" value="NA-bd_OB-fold"/>
</dbReference>
<dbReference type="InterPro" id="IPR012162">
    <property type="entry name" value="PNPase"/>
</dbReference>
<dbReference type="InterPro" id="IPR027408">
    <property type="entry name" value="PNPase/RNase_PH_dom_sf"/>
</dbReference>
<dbReference type="InterPro" id="IPR015848">
    <property type="entry name" value="PNPase_PH_RNA-bd_bac/org-type"/>
</dbReference>
<dbReference type="InterPro" id="IPR036456">
    <property type="entry name" value="PNPase_PH_RNA-bd_sf"/>
</dbReference>
<dbReference type="InterPro" id="IPR020568">
    <property type="entry name" value="Ribosomal_Su5_D2-typ_SF"/>
</dbReference>
<dbReference type="InterPro" id="IPR003029">
    <property type="entry name" value="S1_domain"/>
</dbReference>
<dbReference type="NCBIfam" id="TIGR03591">
    <property type="entry name" value="polynuc_phos"/>
    <property type="match status" value="1"/>
</dbReference>
<dbReference type="NCBIfam" id="NF008805">
    <property type="entry name" value="PRK11824.1"/>
    <property type="match status" value="1"/>
</dbReference>
<dbReference type="PANTHER" id="PTHR11252">
    <property type="entry name" value="POLYRIBONUCLEOTIDE NUCLEOTIDYLTRANSFERASE"/>
    <property type="match status" value="1"/>
</dbReference>
<dbReference type="PANTHER" id="PTHR11252:SF0">
    <property type="entry name" value="POLYRIBONUCLEOTIDE NUCLEOTIDYLTRANSFERASE 1, MITOCHONDRIAL"/>
    <property type="match status" value="1"/>
</dbReference>
<dbReference type="Pfam" id="PF00013">
    <property type="entry name" value="KH_1"/>
    <property type="match status" value="1"/>
</dbReference>
<dbReference type="Pfam" id="PF03726">
    <property type="entry name" value="PNPase"/>
    <property type="match status" value="1"/>
</dbReference>
<dbReference type="Pfam" id="PF01138">
    <property type="entry name" value="RNase_PH"/>
    <property type="match status" value="2"/>
</dbReference>
<dbReference type="Pfam" id="PF03725">
    <property type="entry name" value="RNase_PH_C"/>
    <property type="match status" value="2"/>
</dbReference>
<dbReference type="Pfam" id="PF00575">
    <property type="entry name" value="S1"/>
    <property type="match status" value="1"/>
</dbReference>
<dbReference type="PIRSF" id="PIRSF005499">
    <property type="entry name" value="PNPase"/>
    <property type="match status" value="1"/>
</dbReference>
<dbReference type="SMART" id="SM00322">
    <property type="entry name" value="KH"/>
    <property type="match status" value="1"/>
</dbReference>
<dbReference type="SMART" id="SM00316">
    <property type="entry name" value="S1"/>
    <property type="match status" value="1"/>
</dbReference>
<dbReference type="SUPFAM" id="SSF54791">
    <property type="entry name" value="Eukaryotic type KH-domain (KH-domain type I)"/>
    <property type="match status" value="1"/>
</dbReference>
<dbReference type="SUPFAM" id="SSF50249">
    <property type="entry name" value="Nucleic acid-binding proteins"/>
    <property type="match status" value="1"/>
</dbReference>
<dbReference type="SUPFAM" id="SSF46915">
    <property type="entry name" value="Polynucleotide phosphorylase/guanosine pentaphosphate synthase (PNPase/GPSI), domain 3"/>
    <property type="match status" value="1"/>
</dbReference>
<dbReference type="SUPFAM" id="SSF55666">
    <property type="entry name" value="Ribonuclease PH domain 2-like"/>
    <property type="match status" value="2"/>
</dbReference>
<dbReference type="SUPFAM" id="SSF54211">
    <property type="entry name" value="Ribosomal protein S5 domain 2-like"/>
    <property type="match status" value="2"/>
</dbReference>
<dbReference type="PROSITE" id="PS50084">
    <property type="entry name" value="KH_TYPE_1"/>
    <property type="match status" value="1"/>
</dbReference>
<dbReference type="PROSITE" id="PS50126">
    <property type="entry name" value="S1"/>
    <property type="match status" value="1"/>
</dbReference>